<comment type="function">
    <text evidence="2">GTP hydrolase that promotes the GTP-dependent binding of aminoacyl-tRNA to the A-site of ribosomes during protein biosynthesis.</text>
</comment>
<comment type="catalytic activity">
    <reaction evidence="2">
        <text>GTP + H2O = GDP + phosphate + H(+)</text>
        <dbReference type="Rhea" id="RHEA:19669"/>
        <dbReference type="ChEBI" id="CHEBI:15377"/>
        <dbReference type="ChEBI" id="CHEBI:15378"/>
        <dbReference type="ChEBI" id="CHEBI:37565"/>
        <dbReference type="ChEBI" id="CHEBI:43474"/>
        <dbReference type="ChEBI" id="CHEBI:58189"/>
        <dbReference type="EC" id="3.6.5.3"/>
    </reaction>
    <physiologicalReaction direction="left-to-right" evidence="2">
        <dbReference type="Rhea" id="RHEA:19670"/>
    </physiologicalReaction>
</comment>
<comment type="subunit">
    <text evidence="2">Monomer.</text>
</comment>
<comment type="subcellular location">
    <subcellularLocation>
        <location evidence="2">Cytoplasm</location>
    </subcellularLocation>
</comment>
<comment type="similarity">
    <text evidence="2">Belongs to the TRAFAC class translation factor GTPase superfamily. Classic translation factor GTPase family. EF-Tu/EF-1A subfamily.</text>
</comment>
<gene>
    <name evidence="2" type="primary">tuf</name>
    <name type="ordered locus">BCc_343</name>
</gene>
<feature type="chain" id="PRO_1000015624" description="Elongation factor Tu">
    <location>
        <begin position="1"/>
        <end position="394"/>
    </location>
</feature>
<feature type="domain" description="tr-type G">
    <location>
        <begin position="10"/>
        <end position="204"/>
    </location>
</feature>
<feature type="region of interest" description="G1" evidence="1">
    <location>
        <begin position="19"/>
        <end position="26"/>
    </location>
</feature>
<feature type="region of interest" description="G2" evidence="1">
    <location>
        <begin position="60"/>
        <end position="64"/>
    </location>
</feature>
<feature type="region of interest" description="G3" evidence="1">
    <location>
        <begin position="81"/>
        <end position="84"/>
    </location>
</feature>
<feature type="region of interest" description="G4" evidence="1">
    <location>
        <begin position="136"/>
        <end position="139"/>
    </location>
</feature>
<feature type="region of interest" description="G5" evidence="1">
    <location>
        <begin position="174"/>
        <end position="176"/>
    </location>
</feature>
<feature type="binding site" evidence="2">
    <location>
        <begin position="19"/>
        <end position="26"/>
    </location>
    <ligand>
        <name>GTP</name>
        <dbReference type="ChEBI" id="CHEBI:37565"/>
    </ligand>
</feature>
<feature type="binding site" evidence="2">
    <location>
        <position position="26"/>
    </location>
    <ligand>
        <name>Mg(2+)</name>
        <dbReference type="ChEBI" id="CHEBI:18420"/>
    </ligand>
</feature>
<feature type="binding site" evidence="2">
    <location>
        <begin position="81"/>
        <end position="85"/>
    </location>
    <ligand>
        <name>GTP</name>
        <dbReference type="ChEBI" id="CHEBI:37565"/>
    </ligand>
</feature>
<feature type="binding site" evidence="2">
    <location>
        <begin position="136"/>
        <end position="139"/>
    </location>
    <ligand>
        <name>GTP</name>
        <dbReference type="ChEBI" id="CHEBI:37565"/>
    </ligand>
</feature>
<proteinExistence type="inferred from homology"/>
<organism>
    <name type="scientific">Buchnera aphidicola subsp. Cinara cedri (strain Cc)</name>
    <dbReference type="NCBI Taxonomy" id="372461"/>
    <lineage>
        <taxon>Bacteria</taxon>
        <taxon>Pseudomonadati</taxon>
        <taxon>Pseudomonadota</taxon>
        <taxon>Gammaproteobacteria</taxon>
        <taxon>Enterobacterales</taxon>
        <taxon>Erwiniaceae</taxon>
        <taxon>Buchnera</taxon>
    </lineage>
</organism>
<dbReference type="EC" id="3.6.5.3" evidence="2"/>
<dbReference type="EMBL" id="CP000263">
    <property type="protein sequence ID" value="ABJ90797.1"/>
    <property type="molecule type" value="Genomic_DNA"/>
</dbReference>
<dbReference type="RefSeq" id="WP_011672716.1">
    <property type="nucleotide sequence ID" value="NC_008513.1"/>
</dbReference>
<dbReference type="SMR" id="Q057A2"/>
<dbReference type="STRING" id="372461.BCc_343"/>
<dbReference type="KEGG" id="bcc:BCc_343"/>
<dbReference type="eggNOG" id="COG0050">
    <property type="taxonomic scope" value="Bacteria"/>
</dbReference>
<dbReference type="HOGENOM" id="CLU_007265_0_2_6"/>
<dbReference type="OrthoDB" id="9803139at2"/>
<dbReference type="Proteomes" id="UP000000669">
    <property type="component" value="Chromosome"/>
</dbReference>
<dbReference type="GO" id="GO:0005829">
    <property type="term" value="C:cytosol"/>
    <property type="evidence" value="ECO:0007669"/>
    <property type="project" value="TreeGrafter"/>
</dbReference>
<dbReference type="GO" id="GO:0005525">
    <property type="term" value="F:GTP binding"/>
    <property type="evidence" value="ECO:0007669"/>
    <property type="project" value="UniProtKB-UniRule"/>
</dbReference>
<dbReference type="GO" id="GO:0003924">
    <property type="term" value="F:GTPase activity"/>
    <property type="evidence" value="ECO:0007669"/>
    <property type="project" value="InterPro"/>
</dbReference>
<dbReference type="GO" id="GO:0097216">
    <property type="term" value="F:guanosine tetraphosphate binding"/>
    <property type="evidence" value="ECO:0007669"/>
    <property type="project" value="UniProtKB-ARBA"/>
</dbReference>
<dbReference type="GO" id="GO:0003746">
    <property type="term" value="F:translation elongation factor activity"/>
    <property type="evidence" value="ECO:0007669"/>
    <property type="project" value="UniProtKB-UniRule"/>
</dbReference>
<dbReference type="CDD" id="cd01884">
    <property type="entry name" value="EF_Tu"/>
    <property type="match status" value="1"/>
</dbReference>
<dbReference type="CDD" id="cd03697">
    <property type="entry name" value="EFTU_II"/>
    <property type="match status" value="1"/>
</dbReference>
<dbReference type="CDD" id="cd03707">
    <property type="entry name" value="EFTU_III"/>
    <property type="match status" value="1"/>
</dbReference>
<dbReference type="FunFam" id="2.40.30.10:FF:000001">
    <property type="entry name" value="Elongation factor Tu"/>
    <property type="match status" value="1"/>
</dbReference>
<dbReference type="FunFam" id="3.40.50.300:FF:000003">
    <property type="entry name" value="Elongation factor Tu"/>
    <property type="match status" value="1"/>
</dbReference>
<dbReference type="Gene3D" id="3.40.50.300">
    <property type="entry name" value="P-loop containing nucleotide triphosphate hydrolases"/>
    <property type="match status" value="1"/>
</dbReference>
<dbReference type="Gene3D" id="2.40.30.10">
    <property type="entry name" value="Translation factors"/>
    <property type="match status" value="2"/>
</dbReference>
<dbReference type="HAMAP" id="MF_00118_B">
    <property type="entry name" value="EF_Tu_B"/>
    <property type="match status" value="1"/>
</dbReference>
<dbReference type="InterPro" id="IPR041709">
    <property type="entry name" value="EF-Tu_GTP-bd"/>
</dbReference>
<dbReference type="InterPro" id="IPR050055">
    <property type="entry name" value="EF-Tu_GTPase"/>
</dbReference>
<dbReference type="InterPro" id="IPR004161">
    <property type="entry name" value="EFTu-like_2"/>
</dbReference>
<dbReference type="InterPro" id="IPR033720">
    <property type="entry name" value="EFTU_2"/>
</dbReference>
<dbReference type="InterPro" id="IPR031157">
    <property type="entry name" value="G_TR_CS"/>
</dbReference>
<dbReference type="InterPro" id="IPR027417">
    <property type="entry name" value="P-loop_NTPase"/>
</dbReference>
<dbReference type="InterPro" id="IPR005225">
    <property type="entry name" value="Small_GTP-bd"/>
</dbReference>
<dbReference type="InterPro" id="IPR000795">
    <property type="entry name" value="T_Tr_GTP-bd_dom"/>
</dbReference>
<dbReference type="InterPro" id="IPR009000">
    <property type="entry name" value="Transl_B-barrel_sf"/>
</dbReference>
<dbReference type="InterPro" id="IPR009001">
    <property type="entry name" value="Transl_elong_EF1A/Init_IF2_C"/>
</dbReference>
<dbReference type="InterPro" id="IPR004541">
    <property type="entry name" value="Transl_elong_EFTu/EF1A_bac/org"/>
</dbReference>
<dbReference type="InterPro" id="IPR004160">
    <property type="entry name" value="Transl_elong_EFTu/EF1A_C"/>
</dbReference>
<dbReference type="NCBIfam" id="TIGR00485">
    <property type="entry name" value="EF-Tu"/>
    <property type="match status" value="1"/>
</dbReference>
<dbReference type="NCBIfam" id="NF000766">
    <property type="entry name" value="PRK00049.1"/>
    <property type="match status" value="1"/>
</dbReference>
<dbReference type="NCBIfam" id="NF009372">
    <property type="entry name" value="PRK12735.1"/>
    <property type="match status" value="1"/>
</dbReference>
<dbReference type="NCBIfam" id="NF009373">
    <property type="entry name" value="PRK12736.1"/>
    <property type="match status" value="1"/>
</dbReference>
<dbReference type="NCBIfam" id="TIGR00231">
    <property type="entry name" value="small_GTP"/>
    <property type="match status" value="1"/>
</dbReference>
<dbReference type="PANTHER" id="PTHR43721:SF22">
    <property type="entry name" value="ELONGATION FACTOR TU, MITOCHONDRIAL"/>
    <property type="match status" value="1"/>
</dbReference>
<dbReference type="PANTHER" id="PTHR43721">
    <property type="entry name" value="ELONGATION FACTOR TU-RELATED"/>
    <property type="match status" value="1"/>
</dbReference>
<dbReference type="Pfam" id="PF00009">
    <property type="entry name" value="GTP_EFTU"/>
    <property type="match status" value="1"/>
</dbReference>
<dbReference type="Pfam" id="PF03144">
    <property type="entry name" value="GTP_EFTU_D2"/>
    <property type="match status" value="1"/>
</dbReference>
<dbReference type="Pfam" id="PF03143">
    <property type="entry name" value="GTP_EFTU_D3"/>
    <property type="match status" value="1"/>
</dbReference>
<dbReference type="PRINTS" id="PR00315">
    <property type="entry name" value="ELONGATNFCT"/>
</dbReference>
<dbReference type="SUPFAM" id="SSF50465">
    <property type="entry name" value="EF-Tu/eEF-1alpha/eIF2-gamma C-terminal domain"/>
    <property type="match status" value="1"/>
</dbReference>
<dbReference type="SUPFAM" id="SSF52540">
    <property type="entry name" value="P-loop containing nucleoside triphosphate hydrolases"/>
    <property type="match status" value="1"/>
</dbReference>
<dbReference type="SUPFAM" id="SSF50447">
    <property type="entry name" value="Translation proteins"/>
    <property type="match status" value="1"/>
</dbReference>
<dbReference type="PROSITE" id="PS00301">
    <property type="entry name" value="G_TR_1"/>
    <property type="match status" value="1"/>
</dbReference>
<dbReference type="PROSITE" id="PS51722">
    <property type="entry name" value="G_TR_2"/>
    <property type="match status" value="1"/>
</dbReference>
<accession>Q057A2</accession>
<sequence>MSKEKFNRSKPHINVGTIGHVDHGKTTLTSAITTVLSKRFGGKACAFEQIDNAPEEKARGITINTSHVEYDTELRHYAHVDCPGHADYIKNMITGAAQMDGAILVVAATDGPMPQTREHILLGRQVGVPHIIVFLNKCDMVDDEELLELVEMEVRDLLTQYDFPGDNIPIIRGSALKALEGEKIWEDKIIELANSLDKYIPIPVRAVDEPFLLPIEDVFSISGRGTVVTGRIERGILKVGEEVEIVGIKSTTKTICTGVEMFRKLLDEGRAGENVGILLRGTKREDIERGQVLAKPGTINPHVKFESEVYVLSKEEGGRHTPFFKGYRPQFYFRTTDVTGSIELPENIEMVMPGDNINMVVTLIHPIAMAEGLRFAIREGGRTVGAGVVTKVIA</sequence>
<keyword id="KW-0963">Cytoplasm</keyword>
<keyword id="KW-0251">Elongation factor</keyword>
<keyword id="KW-0342">GTP-binding</keyword>
<keyword id="KW-0378">Hydrolase</keyword>
<keyword id="KW-0460">Magnesium</keyword>
<keyword id="KW-0479">Metal-binding</keyword>
<keyword id="KW-0547">Nucleotide-binding</keyword>
<keyword id="KW-0648">Protein biosynthesis</keyword>
<keyword id="KW-1185">Reference proteome</keyword>
<evidence type="ECO:0000250" key="1"/>
<evidence type="ECO:0000255" key="2">
    <source>
        <dbReference type="HAMAP-Rule" id="MF_00118"/>
    </source>
</evidence>
<reference key="1">
    <citation type="journal article" date="2006" name="Science">
        <title>A small microbial genome: the end of a long symbiotic relationship?</title>
        <authorList>
            <person name="Perez-Brocal V."/>
            <person name="Gil R."/>
            <person name="Ramos S."/>
            <person name="Lamelas A."/>
            <person name="Postigo M."/>
            <person name="Michelena J.M."/>
            <person name="Silva F.J."/>
            <person name="Moya A."/>
            <person name="Latorre A."/>
        </authorList>
    </citation>
    <scope>NUCLEOTIDE SEQUENCE [LARGE SCALE GENOMIC DNA]</scope>
    <source>
        <strain>Cc</strain>
    </source>
</reference>
<name>EFTU_BUCCC</name>
<protein>
    <recommendedName>
        <fullName evidence="2">Elongation factor Tu</fullName>
        <shortName evidence="2">EF-Tu</shortName>
        <ecNumber evidence="2">3.6.5.3</ecNumber>
    </recommendedName>
</protein>